<protein>
    <recommendedName>
        <fullName evidence="1">tRNA uridine 5-carboxymethylaminomethyl modification enzyme MnmG</fullName>
    </recommendedName>
    <alternativeName>
        <fullName evidence="1">Glucose-inhibited division protein A</fullName>
    </alternativeName>
</protein>
<gene>
    <name evidence="1" type="primary">mnmG</name>
    <name evidence="1" type="synonym">gidA</name>
    <name type="ordered locus">Tmel_0824</name>
</gene>
<dbReference type="EMBL" id="CP000716">
    <property type="protein sequence ID" value="ABR30685.1"/>
    <property type="molecule type" value="Genomic_DNA"/>
</dbReference>
<dbReference type="RefSeq" id="WP_012057046.1">
    <property type="nucleotide sequence ID" value="NC_009616.1"/>
</dbReference>
<dbReference type="SMR" id="A6LL84"/>
<dbReference type="STRING" id="391009.Tmel_0824"/>
<dbReference type="KEGG" id="tme:Tmel_0824"/>
<dbReference type="eggNOG" id="COG0445">
    <property type="taxonomic scope" value="Bacteria"/>
</dbReference>
<dbReference type="HOGENOM" id="CLU_007831_2_2_0"/>
<dbReference type="OrthoDB" id="9815560at2"/>
<dbReference type="Proteomes" id="UP000001110">
    <property type="component" value="Chromosome"/>
</dbReference>
<dbReference type="GO" id="GO:0005829">
    <property type="term" value="C:cytosol"/>
    <property type="evidence" value="ECO:0007669"/>
    <property type="project" value="TreeGrafter"/>
</dbReference>
<dbReference type="GO" id="GO:0050660">
    <property type="term" value="F:flavin adenine dinucleotide binding"/>
    <property type="evidence" value="ECO:0007669"/>
    <property type="project" value="UniProtKB-UniRule"/>
</dbReference>
<dbReference type="GO" id="GO:0030488">
    <property type="term" value="P:tRNA methylation"/>
    <property type="evidence" value="ECO:0007669"/>
    <property type="project" value="TreeGrafter"/>
</dbReference>
<dbReference type="GO" id="GO:0002098">
    <property type="term" value="P:tRNA wobble uridine modification"/>
    <property type="evidence" value="ECO:0007669"/>
    <property type="project" value="InterPro"/>
</dbReference>
<dbReference type="FunFam" id="1.10.10.1800:FF:000001">
    <property type="entry name" value="tRNA uridine 5-carboxymethylaminomethyl modification enzyme MnmG"/>
    <property type="match status" value="1"/>
</dbReference>
<dbReference type="FunFam" id="1.10.150.570:FF:000001">
    <property type="entry name" value="tRNA uridine 5-carboxymethylaminomethyl modification enzyme MnmG"/>
    <property type="match status" value="1"/>
</dbReference>
<dbReference type="FunFam" id="3.50.50.60:FF:000002">
    <property type="entry name" value="tRNA uridine 5-carboxymethylaminomethyl modification enzyme MnmG"/>
    <property type="match status" value="1"/>
</dbReference>
<dbReference type="Gene3D" id="3.50.50.60">
    <property type="entry name" value="FAD/NAD(P)-binding domain"/>
    <property type="match status" value="2"/>
</dbReference>
<dbReference type="Gene3D" id="1.10.150.570">
    <property type="entry name" value="GidA associated domain, C-terminal subdomain"/>
    <property type="match status" value="1"/>
</dbReference>
<dbReference type="Gene3D" id="1.10.10.1800">
    <property type="entry name" value="tRNA uridine 5-carboxymethylaminomethyl modification enzyme MnmG/GidA"/>
    <property type="match status" value="1"/>
</dbReference>
<dbReference type="HAMAP" id="MF_00129">
    <property type="entry name" value="MnmG_GidA"/>
    <property type="match status" value="1"/>
</dbReference>
<dbReference type="InterPro" id="IPR036188">
    <property type="entry name" value="FAD/NAD-bd_sf"/>
</dbReference>
<dbReference type="InterPro" id="IPR049312">
    <property type="entry name" value="GIDA_C_N"/>
</dbReference>
<dbReference type="InterPro" id="IPR004416">
    <property type="entry name" value="MnmG"/>
</dbReference>
<dbReference type="InterPro" id="IPR002218">
    <property type="entry name" value="MnmG-rel"/>
</dbReference>
<dbReference type="InterPro" id="IPR020595">
    <property type="entry name" value="MnmG-rel_CS"/>
</dbReference>
<dbReference type="InterPro" id="IPR026904">
    <property type="entry name" value="MnmG_C"/>
</dbReference>
<dbReference type="InterPro" id="IPR047001">
    <property type="entry name" value="MnmG_C_subdom"/>
</dbReference>
<dbReference type="InterPro" id="IPR044920">
    <property type="entry name" value="MnmG_C_subdom_sf"/>
</dbReference>
<dbReference type="InterPro" id="IPR040131">
    <property type="entry name" value="MnmG_N"/>
</dbReference>
<dbReference type="NCBIfam" id="TIGR00136">
    <property type="entry name" value="mnmG_gidA"/>
    <property type="match status" value="1"/>
</dbReference>
<dbReference type="PANTHER" id="PTHR11806">
    <property type="entry name" value="GLUCOSE INHIBITED DIVISION PROTEIN A"/>
    <property type="match status" value="1"/>
</dbReference>
<dbReference type="PANTHER" id="PTHR11806:SF0">
    <property type="entry name" value="PROTEIN MTO1 HOMOLOG, MITOCHONDRIAL"/>
    <property type="match status" value="1"/>
</dbReference>
<dbReference type="Pfam" id="PF01134">
    <property type="entry name" value="GIDA"/>
    <property type="match status" value="1"/>
</dbReference>
<dbReference type="Pfam" id="PF21680">
    <property type="entry name" value="GIDA_C_1st"/>
    <property type="match status" value="1"/>
</dbReference>
<dbReference type="Pfam" id="PF13932">
    <property type="entry name" value="SAM_GIDA_C"/>
    <property type="match status" value="1"/>
</dbReference>
<dbReference type="PRINTS" id="PR00411">
    <property type="entry name" value="PNDRDTASEI"/>
</dbReference>
<dbReference type="SMART" id="SM01228">
    <property type="entry name" value="GIDA_assoc_3"/>
    <property type="match status" value="1"/>
</dbReference>
<dbReference type="SUPFAM" id="SSF51905">
    <property type="entry name" value="FAD/NAD(P)-binding domain"/>
    <property type="match status" value="1"/>
</dbReference>
<dbReference type="PROSITE" id="PS01280">
    <property type="entry name" value="GIDA_1"/>
    <property type="match status" value="1"/>
</dbReference>
<dbReference type="PROSITE" id="PS01281">
    <property type="entry name" value="GIDA_2"/>
    <property type="match status" value="1"/>
</dbReference>
<keyword id="KW-0963">Cytoplasm</keyword>
<keyword id="KW-0274">FAD</keyword>
<keyword id="KW-0285">Flavoprotein</keyword>
<keyword id="KW-0520">NAD</keyword>
<keyword id="KW-0819">tRNA processing</keyword>
<reference key="1">
    <citation type="submission" date="2007-05" db="EMBL/GenBank/DDBJ databases">
        <title>Complete sequence of Thermosipho melanesiensis BI429.</title>
        <authorList>
            <consortium name="US DOE Joint Genome Institute"/>
            <person name="Copeland A."/>
            <person name="Lucas S."/>
            <person name="Lapidus A."/>
            <person name="Barry K."/>
            <person name="Glavina del Rio T."/>
            <person name="Dalin E."/>
            <person name="Tice H."/>
            <person name="Pitluck S."/>
            <person name="Chertkov O."/>
            <person name="Brettin T."/>
            <person name="Bruce D."/>
            <person name="Detter J.C."/>
            <person name="Han C."/>
            <person name="Schmutz J."/>
            <person name="Larimer F."/>
            <person name="Land M."/>
            <person name="Hauser L."/>
            <person name="Kyrpides N."/>
            <person name="Mikhailova N."/>
            <person name="Nelson K."/>
            <person name="Gogarten J.P."/>
            <person name="Noll K."/>
            <person name="Richardson P."/>
        </authorList>
    </citation>
    <scope>NUCLEOTIDE SEQUENCE [LARGE SCALE GENOMIC DNA]</scope>
    <source>
        <strain>DSM 12029 / CIP 104789 / BI429</strain>
    </source>
</reference>
<proteinExistence type="inferred from homology"/>
<organism>
    <name type="scientific">Thermosipho melanesiensis (strain DSM 12029 / CIP 104789 / BI429)</name>
    <dbReference type="NCBI Taxonomy" id="391009"/>
    <lineage>
        <taxon>Bacteria</taxon>
        <taxon>Thermotogati</taxon>
        <taxon>Thermotogota</taxon>
        <taxon>Thermotogae</taxon>
        <taxon>Thermotogales</taxon>
        <taxon>Fervidobacteriaceae</taxon>
        <taxon>Thermosipho</taxon>
    </lineage>
</organism>
<accession>A6LL84</accession>
<sequence length="624" mass="70409">MFFERPKDDIEFDVIVVGTGHAGIEAALAPARLGLRTLILTTNLDNVGWAPCNPAIGGPAKGIVVREIDVLGGEMAKTTDETMINVRMLNTGKGPAVRALRAQIDKYAYSQMMKNKLQSQENLVLRFGLVEKILVKDGKVYGVVDSFGIDYRAKAVILTTGTFLRGKIFIGRDTMEAGRMGDLPAKGLSKSLMDIGFKLSRFKTGTPSRVLKSSINFSKMIRQDTDDEPRAFSHFSEPKVLPKDHPCWLTHTNEKTHKIIRDYLVYSPLYGKVKLIQSVGPRYCPSIEDKVVKFNRDSHQVFVEPEGKNSQEYYLNGLSTSLPYAAQIKMLRTIPGLENVVIVRPAYAIEYDYIDPLQLYQTLESKLIEGLYFAGQINGTSGYEEAAGQGLVAGINAAMKILGEKPLILKRSESYIGILIDDLTTKGVDEPYRLLTSRAEYRLLLRHDNAHIRLAKYGYRVGLIPKWFYEKVLNLEKNIKLQIERLKNVKVPVSDRVNDILVKLGSTPLKEGTKLYNLLKRPEISYNDIEELDSERITDKELLEQIEIYIKYEGYIEKMLEEVKIFEEYESVDISKINLDKVPNLSTEAREKLKKVMPRSIGQAMRIPGVTPADIANIISYIEK</sequence>
<feature type="chain" id="PRO_1000016704" description="tRNA uridine 5-carboxymethylaminomethyl modification enzyme MnmG">
    <location>
        <begin position="1"/>
        <end position="624"/>
    </location>
</feature>
<feature type="binding site" evidence="1">
    <location>
        <begin position="18"/>
        <end position="23"/>
    </location>
    <ligand>
        <name>FAD</name>
        <dbReference type="ChEBI" id="CHEBI:57692"/>
    </ligand>
</feature>
<feature type="binding site" evidence="1">
    <location>
        <begin position="280"/>
        <end position="294"/>
    </location>
    <ligand>
        <name>NAD(+)</name>
        <dbReference type="ChEBI" id="CHEBI:57540"/>
    </ligand>
</feature>
<comment type="function">
    <text evidence="1">NAD-binding protein involved in the addition of a carboxymethylaminomethyl (cmnm) group at the wobble position (U34) of certain tRNAs, forming tRNA-cmnm(5)s(2)U34.</text>
</comment>
<comment type="cofactor">
    <cofactor evidence="1">
        <name>FAD</name>
        <dbReference type="ChEBI" id="CHEBI:57692"/>
    </cofactor>
</comment>
<comment type="subunit">
    <text evidence="1">Homodimer. Heterotetramer of two MnmE and two MnmG subunits.</text>
</comment>
<comment type="subcellular location">
    <subcellularLocation>
        <location evidence="1">Cytoplasm</location>
    </subcellularLocation>
</comment>
<comment type="similarity">
    <text evidence="1">Belongs to the MnmG family.</text>
</comment>
<name>MNMG_THEM4</name>
<evidence type="ECO:0000255" key="1">
    <source>
        <dbReference type="HAMAP-Rule" id="MF_00129"/>
    </source>
</evidence>